<reference key="1">
    <citation type="journal article" date="2007" name="Genome Biol.">
        <title>Genome analysis and genome-wide proteomics of Thermococcus gammatolerans, the most radioresistant organism known amongst the Archaea.</title>
        <authorList>
            <person name="Zivanovic Y."/>
            <person name="Armengaud J."/>
            <person name="Lagorce A."/>
            <person name="Leplat C."/>
            <person name="Guerin P."/>
            <person name="Dutertre M."/>
            <person name="Anthouard V."/>
            <person name="Forterre P."/>
            <person name="Wincker P."/>
            <person name="Confalonieri F."/>
        </authorList>
    </citation>
    <scope>NUCLEOTIDE SEQUENCE [LARGE SCALE GENOMIC DNA]</scope>
    <source>
        <strain>DSM 15229 / JCM 11827 / EJ3</strain>
    </source>
</reference>
<evidence type="ECO:0000255" key="1">
    <source>
        <dbReference type="HAMAP-Rule" id="MF_00085"/>
    </source>
</evidence>
<organism>
    <name type="scientific">Thermococcus gammatolerans (strain DSM 15229 / JCM 11827 / EJ3)</name>
    <dbReference type="NCBI Taxonomy" id="593117"/>
    <lineage>
        <taxon>Archaea</taxon>
        <taxon>Methanobacteriati</taxon>
        <taxon>Methanobacteriota</taxon>
        <taxon>Thermococci</taxon>
        <taxon>Thermococcales</taxon>
        <taxon>Thermococcaceae</taxon>
        <taxon>Thermococcus</taxon>
    </lineage>
</organism>
<accession>C5A5M5</accession>
<name>IF5A_THEGJ</name>
<keyword id="KW-0963">Cytoplasm</keyword>
<keyword id="KW-0385">Hypusine</keyword>
<keyword id="KW-0396">Initiation factor</keyword>
<keyword id="KW-0648">Protein biosynthesis</keyword>
<keyword id="KW-1185">Reference proteome</keyword>
<gene>
    <name type="primary">eIF5A</name>
    <name type="ordered locus">TGAM_1035</name>
</gene>
<dbReference type="EMBL" id="CP001398">
    <property type="protein sequence ID" value="ACS33537.1"/>
    <property type="molecule type" value="Genomic_DNA"/>
</dbReference>
<dbReference type="RefSeq" id="WP_015858651.1">
    <property type="nucleotide sequence ID" value="NC_012804.1"/>
</dbReference>
<dbReference type="SMR" id="C5A5M5"/>
<dbReference type="STRING" id="593117.TGAM_1035"/>
<dbReference type="PaxDb" id="593117-TGAM_1035"/>
<dbReference type="GeneID" id="7988092"/>
<dbReference type="KEGG" id="tga:TGAM_1035"/>
<dbReference type="PATRIC" id="fig|593117.10.peg.1032"/>
<dbReference type="eggNOG" id="arCOG04277">
    <property type="taxonomic scope" value="Archaea"/>
</dbReference>
<dbReference type="HOGENOM" id="CLU_102600_3_0_2"/>
<dbReference type="OrthoDB" id="23689at2157"/>
<dbReference type="Proteomes" id="UP000001488">
    <property type="component" value="Chromosome"/>
</dbReference>
<dbReference type="GO" id="GO:0005737">
    <property type="term" value="C:cytoplasm"/>
    <property type="evidence" value="ECO:0007669"/>
    <property type="project" value="UniProtKB-SubCell"/>
</dbReference>
<dbReference type="GO" id="GO:0043022">
    <property type="term" value="F:ribosome binding"/>
    <property type="evidence" value="ECO:0007669"/>
    <property type="project" value="InterPro"/>
</dbReference>
<dbReference type="GO" id="GO:0003723">
    <property type="term" value="F:RNA binding"/>
    <property type="evidence" value="ECO:0007669"/>
    <property type="project" value="InterPro"/>
</dbReference>
<dbReference type="GO" id="GO:0003746">
    <property type="term" value="F:translation elongation factor activity"/>
    <property type="evidence" value="ECO:0007669"/>
    <property type="project" value="InterPro"/>
</dbReference>
<dbReference type="GO" id="GO:0003743">
    <property type="term" value="F:translation initiation factor activity"/>
    <property type="evidence" value="ECO:0007669"/>
    <property type="project" value="UniProtKB-UniRule"/>
</dbReference>
<dbReference type="GO" id="GO:0045901">
    <property type="term" value="P:positive regulation of translational elongation"/>
    <property type="evidence" value="ECO:0007669"/>
    <property type="project" value="InterPro"/>
</dbReference>
<dbReference type="GO" id="GO:0045905">
    <property type="term" value="P:positive regulation of translational termination"/>
    <property type="evidence" value="ECO:0007669"/>
    <property type="project" value="InterPro"/>
</dbReference>
<dbReference type="CDD" id="cd04467">
    <property type="entry name" value="S1_aIF5A"/>
    <property type="match status" value="1"/>
</dbReference>
<dbReference type="FunFam" id="2.30.30.30:FF:000038">
    <property type="entry name" value="Translation initiation factor 5A"/>
    <property type="match status" value="1"/>
</dbReference>
<dbReference type="FunFam" id="2.40.50.140:FF:000334">
    <property type="entry name" value="Translation initiation factor 5A"/>
    <property type="match status" value="1"/>
</dbReference>
<dbReference type="Gene3D" id="2.30.30.30">
    <property type="match status" value="1"/>
</dbReference>
<dbReference type="Gene3D" id="2.40.50.140">
    <property type="entry name" value="Nucleic acid-binding proteins"/>
    <property type="match status" value="1"/>
</dbReference>
<dbReference type="HAMAP" id="MF_00085">
    <property type="entry name" value="eIF_5A"/>
    <property type="match status" value="1"/>
</dbReference>
<dbReference type="InterPro" id="IPR001884">
    <property type="entry name" value="IF5A-like"/>
</dbReference>
<dbReference type="InterPro" id="IPR048670">
    <property type="entry name" value="IF5A-like_N"/>
</dbReference>
<dbReference type="InterPro" id="IPR012340">
    <property type="entry name" value="NA-bd_OB-fold"/>
</dbReference>
<dbReference type="InterPro" id="IPR014722">
    <property type="entry name" value="Rib_uL2_dom2"/>
</dbReference>
<dbReference type="InterPro" id="IPR019769">
    <property type="entry name" value="Trans_elong_IF5A_hypusine_site"/>
</dbReference>
<dbReference type="InterPro" id="IPR022847">
    <property type="entry name" value="Transl_elong_IF5A_arc"/>
</dbReference>
<dbReference type="InterPro" id="IPR020189">
    <property type="entry name" value="Transl_elong_IF5A_C"/>
</dbReference>
<dbReference type="InterPro" id="IPR008991">
    <property type="entry name" value="Translation_prot_SH3-like_sf"/>
</dbReference>
<dbReference type="NCBIfam" id="TIGR00037">
    <property type="entry name" value="eIF_5A"/>
    <property type="match status" value="1"/>
</dbReference>
<dbReference type="NCBIfam" id="NF003076">
    <property type="entry name" value="PRK03999.1"/>
    <property type="match status" value="1"/>
</dbReference>
<dbReference type="PANTHER" id="PTHR11673">
    <property type="entry name" value="TRANSLATION INITIATION FACTOR 5A FAMILY MEMBER"/>
    <property type="match status" value="1"/>
</dbReference>
<dbReference type="Pfam" id="PF01287">
    <property type="entry name" value="eIF-5a"/>
    <property type="match status" value="1"/>
</dbReference>
<dbReference type="Pfam" id="PF21485">
    <property type="entry name" value="IF5A-like_N"/>
    <property type="match status" value="1"/>
</dbReference>
<dbReference type="PIRSF" id="PIRSF003025">
    <property type="entry name" value="eIF5A"/>
    <property type="match status" value="1"/>
</dbReference>
<dbReference type="SMART" id="SM01376">
    <property type="entry name" value="eIF-5a"/>
    <property type="match status" value="1"/>
</dbReference>
<dbReference type="SUPFAM" id="SSF50249">
    <property type="entry name" value="Nucleic acid-binding proteins"/>
    <property type="match status" value="1"/>
</dbReference>
<dbReference type="SUPFAM" id="SSF50104">
    <property type="entry name" value="Translation proteins SH3-like domain"/>
    <property type="match status" value="1"/>
</dbReference>
<dbReference type="PROSITE" id="PS00302">
    <property type="entry name" value="IF5A_HYPUSINE"/>
    <property type="match status" value="1"/>
</dbReference>
<sequence>MGDKTKVQVSKLKPGRYIIIDGEPCRIVNITVSSPGKHGSAKARIEAVGIFDGKVRSIVKPTSAEVDVPIIDKRVGQVIAITPDTVQIMDMETYELYDVPIETGVEDEVKDQLKEGITVEYWETLGRIQIKKVRGE</sequence>
<feature type="chain" id="PRO_1000202609" description="Translation initiation factor 5A">
    <location>
        <begin position="1"/>
        <end position="136"/>
    </location>
</feature>
<feature type="modified residue" description="Hypusine" evidence="1">
    <location>
        <position position="37"/>
    </location>
</feature>
<comment type="function">
    <text evidence="1">Functions by promoting the formation of the first peptide bond.</text>
</comment>
<comment type="subcellular location">
    <subcellularLocation>
        <location evidence="1">Cytoplasm</location>
    </subcellularLocation>
</comment>
<comment type="similarity">
    <text evidence="1">Belongs to the eIF-5A family.</text>
</comment>
<proteinExistence type="inferred from homology"/>
<protein>
    <recommendedName>
        <fullName evidence="1">Translation initiation factor 5A</fullName>
    </recommendedName>
    <alternativeName>
        <fullName evidence="1">Hypusine-containing protein</fullName>
    </alternativeName>
    <alternativeName>
        <fullName evidence="1">eIF-5A</fullName>
    </alternativeName>
</protein>